<accession>Q0BI90</accession>
<gene>
    <name evidence="1" type="primary">rpsI</name>
    <name type="ordered locus">Bamb_0574</name>
</gene>
<comment type="similarity">
    <text evidence="1">Belongs to the universal ribosomal protein uS9 family.</text>
</comment>
<proteinExistence type="inferred from homology"/>
<reference key="1">
    <citation type="submission" date="2006-08" db="EMBL/GenBank/DDBJ databases">
        <title>Complete sequence of chromosome 1 of Burkholderia cepacia AMMD.</title>
        <authorList>
            <person name="Copeland A."/>
            <person name="Lucas S."/>
            <person name="Lapidus A."/>
            <person name="Barry K."/>
            <person name="Detter J.C."/>
            <person name="Glavina del Rio T."/>
            <person name="Hammon N."/>
            <person name="Israni S."/>
            <person name="Pitluck S."/>
            <person name="Bruce D."/>
            <person name="Chain P."/>
            <person name="Malfatti S."/>
            <person name="Shin M."/>
            <person name="Vergez L."/>
            <person name="Schmutz J."/>
            <person name="Larimer F."/>
            <person name="Land M."/>
            <person name="Hauser L."/>
            <person name="Kyrpides N."/>
            <person name="Kim E."/>
            <person name="Parke J."/>
            <person name="Coenye T."/>
            <person name="Konstantinidis K."/>
            <person name="Ramette A."/>
            <person name="Tiedje J."/>
            <person name="Richardson P."/>
        </authorList>
    </citation>
    <scope>NUCLEOTIDE SEQUENCE [LARGE SCALE GENOMIC DNA]</scope>
    <source>
        <strain>ATCC BAA-244 / DSM 16087 / CCUG 44356 / LMG 19182 / AMMD</strain>
    </source>
</reference>
<dbReference type="EMBL" id="CP000440">
    <property type="protein sequence ID" value="ABI86133.1"/>
    <property type="molecule type" value="Genomic_DNA"/>
</dbReference>
<dbReference type="RefSeq" id="WP_006751887.1">
    <property type="nucleotide sequence ID" value="NZ_CP009798.1"/>
</dbReference>
<dbReference type="SMR" id="Q0BI90"/>
<dbReference type="GeneID" id="93084010"/>
<dbReference type="KEGG" id="bam:Bamb_0574"/>
<dbReference type="PATRIC" id="fig|339670.21.peg.1023"/>
<dbReference type="eggNOG" id="COG0103">
    <property type="taxonomic scope" value="Bacteria"/>
</dbReference>
<dbReference type="Proteomes" id="UP000000662">
    <property type="component" value="Chromosome 1"/>
</dbReference>
<dbReference type="GO" id="GO:0022627">
    <property type="term" value="C:cytosolic small ribosomal subunit"/>
    <property type="evidence" value="ECO:0007669"/>
    <property type="project" value="TreeGrafter"/>
</dbReference>
<dbReference type="GO" id="GO:0003723">
    <property type="term" value="F:RNA binding"/>
    <property type="evidence" value="ECO:0007669"/>
    <property type="project" value="TreeGrafter"/>
</dbReference>
<dbReference type="GO" id="GO:0003735">
    <property type="term" value="F:structural constituent of ribosome"/>
    <property type="evidence" value="ECO:0007669"/>
    <property type="project" value="InterPro"/>
</dbReference>
<dbReference type="GO" id="GO:0006412">
    <property type="term" value="P:translation"/>
    <property type="evidence" value="ECO:0007669"/>
    <property type="project" value="UniProtKB-UniRule"/>
</dbReference>
<dbReference type="FunFam" id="3.30.230.10:FF:000001">
    <property type="entry name" value="30S ribosomal protein S9"/>
    <property type="match status" value="1"/>
</dbReference>
<dbReference type="Gene3D" id="3.30.230.10">
    <property type="match status" value="1"/>
</dbReference>
<dbReference type="HAMAP" id="MF_00532_B">
    <property type="entry name" value="Ribosomal_uS9_B"/>
    <property type="match status" value="1"/>
</dbReference>
<dbReference type="InterPro" id="IPR020568">
    <property type="entry name" value="Ribosomal_Su5_D2-typ_SF"/>
</dbReference>
<dbReference type="InterPro" id="IPR000754">
    <property type="entry name" value="Ribosomal_uS9"/>
</dbReference>
<dbReference type="InterPro" id="IPR023035">
    <property type="entry name" value="Ribosomal_uS9_bac/plastid"/>
</dbReference>
<dbReference type="InterPro" id="IPR020574">
    <property type="entry name" value="Ribosomal_uS9_CS"/>
</dbReference>
<dbReference type="InterPro" id="IPR014721">
    <property type="entry name" value="Ribsml_uS5_D2-typ_fold_subgr"/>
</dbReference>
<dbReference type="NCBIfam" id="NF001099">
    <property type="entry name" value="PRK00132.1"/>
    <property type="match status" value="1"/>
</dbReference>
<dbReference type="PANTHER" id="PTHR21569">
    <property type="entry name" value="RIBOSOMAL PROTEIN S9"/>
    <property type="match status" value="1"/>
</dbReference>
<dbReference type="PANTHER" id="PTHR21569:SF1">
    <property type="entry name" value="SMALL RIBOSOMAL SUBUNIT PROTEIN US9M"/>
    <property type="match status" value="1"/>
</dbReference>
<dbReference type="Pfam" id="PF00380">
    <property type="entry name" value="Ribosomal_S9"/>
    <property type="match status" value="1"/>
</dbReference>
<dbReference type="SUPFAM" id="SSF54211">
    <property type="entry name" value="Ribosomal protein S5 domain 2-like"/>
    <property type="match status" value="1"/>
</dbReference>
<dbReference type="PROSITE" id="PS00360">
    <property type="entry name" value="RIBOSOMAL_S9"/>
    <property type="match status" value="1"/>
</dbReference>
<protein>
    <recommendedName>
        <fullName evidence="1">Small ribosomal subunit protein uS9</fullName>
    </recommendedName>
    <alternativeName>
        <fullName evidence="2">30S ribosomal protein S9</fullName>
    </alternativeName>
</protein>
<sequence length="130" mass="14317">MIGNWNYGTGRRKSAVARVFIKAGKGDIIVNGKPIADYFSRETSLMIVRQPLELTNHGQTFDIKVNVTGGGETGQAGAVRHGITRALIDYDATLKPSLSTAGFVTRDAREVERKKVGLRKARRAKQFSKR</sequence>
<feature type="chain" id="PRO_1000051182" description="Small ribosomal subunit protein uS9">
    <location>
        <begin position="1"/>
        <end position="130"/>
    </location>
</feature>
<keyword id="KW-0687">Ribonucleoprotein</keyword>
<keyword id="KW-0689">Ribosomal protein</keyword>
<name>RS9_BURCM</name>
<evidence type="ECO:0000255" key="1">
    <source>
        <dbReference type="HAMAP-Rule" id="MF_00532"/>
    </source>
</evidence>
<evidence type="ECO:0000305" key="2"/>
<organism>
    <name type="scientific">Burkholderia ambifaria (strain ATCC BAA-244 / DSM 16087 / CCUG 44356 / LMG 19182 / AMMD)</name>
    <name type="common">Burkholderia cepacia (strain AMMD)</name>
    <dbReference type="NCBI Taxonomy" id="339670"/>
    <lineage>
        <taxon>Bacteria</taxon>
        <taxon>Pseudomonadati</taxon>
        <taxon>Pseudomonadota</taxon>
        <taxon>Betaproteobacteria</taxon>
        <taxon>Burkholderiales</taxon>
        <taxon>Burkholderiaceae</taxon>
        <taxon>Burkholderia</taxon>
        <taxon>Burkholderia cepacia complex</taxon>
    </lineage>
</organism>